<organism>
    <name type="scientific">Arabidopsis thaliana</name>
    <name type="common">Mouse-ear cress</name>
    <dbReference type="NCBI Taxonomy" id="3702"/>
    <lineage>
        <taxon>Eukaryota</taxon>
        <taxon>Viridiplantae</taxon>
        <taxon>Streptophyta</taxon>
        <taxon>Embryophyta</taxon>
        <taxon>Tracheophyta</taxon>
        <taxon>Spermatophyta</taxon>
        <taxon>Magnoliopsida</taxon>
        <taxon>eudicotyledons</taxon>
        <taxon>Gunneridae</taxon>
        <taxon>Pentapetalae</taxon>
        <taxon>rosids</taxon>
        <taxon>malvids</taxon>
        <taxon>Brassicales</taxon>
        <taxon>Brassicaceae</taxon>
        <taxon>Camelineae</taxon>
        <taxon>Arabidopsis</taxon>
    </lineage>
</organism>
<reference key="1">
    <citation type="journal article" date="1999" name="Nature">
        <title>Sequence and analysis of chromosome 2 of the plant Arabidopsis thaliana.</title>
        <authorList>
            <person name="Lin X."/>
            <person name="Kaul S."/>
            <person name="Rounsley S.D."/>
            <person name="Shea T.P."/>
            <person name="Benito M.-I."/>
            <person name="Town C.D."/>
            <person name="Fujii C.Y."/>
            <person name="Mason T.M."/>
            <person name="Bowman C.L."/>
            <person name="Barnstead M.E."/>
            <person name="Feldblyum T.V."/>
            <person name="Buell C.R."/>
            <person name="Ketchum K.A."/>
            <person name="Lee J.J."/>
            <person name="Ronning C.M."/>
            <person name="Koo H.L."/>
            <person name="Moffat K.S."/>
            <person name="Cronin L.A."/>
            <person name="Shen M."/>
            <person name="Pai G."/>
            <person name="Van Aken S."/>
            <person name="Umayam L."/>
            <person name="Tallon L.J."/>
            <person name="Gill J.E."/>
            <person name="Adams M.D."/>
            <person name="Carrera A.J."/>
            <person name="Creasy T.H."/>
            <person name="Goodman H.M."/>
            <person name="Somerville C.R."/>
            <person name="Copenhaver G.P."/>
            <person name="Preuss D."/>
            <person name="Nierman W.C."/>
            <person name="White O."/>
            <person name="Eisen J.A."/>
            <person name="Salzberg S.L."/>
            <person name="Fraser C.M."/>
            <person name="Venter J.C."/>
        </authorList>
    </citation>
    <scope>NUCLEOTIDE SEQUENCE [LARGE SCALE GENOMIC DNA]</scope>
    <source>
        <strain>cv. Columbia</strain>
    </source>
</reference>
<reference key="2">
    <citation type="journal article" date="2017" name="Plant J.">
        <title>Araport11: a complete reannotation of the Arabidopsis thaliana reference genome.</title>
        <authorList>
            <person name="Cheng C.Y."/>
            <person name="Krishnakumar V."/>
            <person name="Chan A.P."/>
            <person name="Thibaud-Nissen F."/>
            <person name="Schobel S."/>
            <person name="Town C.D."/>
        </authorList>
    </citation>
    <scope>GENOME REANNOTATION</scope>
    <source>
        <strain>cv. Columbia</strain>
    </source>
</reference>
<reference key="3">
    <citation type="journal article" date="2003" name="Science">
        <title>Empirical analysis of transcriptional activity in the Arabidopsis genome.</title>
        <authorList>
            <person name="Yamada K."/>
            <person name="Lim J."/>
            <person name="Dale J.M."/>
            <person name="Chen H."/>
            <person name="Shinn P."/>
            <person name="Palm C.J."/>
            <person name="Southwick A.M."/>
            <person name="Wu H.C."/>
            <person name="Kim C.J."/>
            <person name="Nguyen M."/>
            <person name="Pham P.K."/>
            <person name="Cheuk R.F."/>
            <person name="Karlin-Newmann G."/>
            <person name="Liu S.X."/>
            <person name="Lam B."/>
            <person name="Sakano H."/>
            <person name="Wu T."/>
            <person name="Yu G."/>
            <person name="Miranda M."/>
            <person name="Quach H.L."/>
            <person name="Tripp M."/>
            <person name="Chang C.H."/>
            <person name="Lee J.M."/>
            <person name="Toriumi M.J."/>
            <person name="Chan M.M."/>
            <person name="Tang C.C."/>
            <person name="Onodera C.S."/>
            <person name="Deng J.M."/>
            <person name="Akiyama K."/>
            <person name="Ansari Y."/>
            <person name="Arakawa T."/>
            <person name="Banh J."/>
            <person name="Banno F."/>
            <person name="Bowser L."/>
            <person name="Brooks S.Y."/>
            <person name="Carninci P."/>
            <person name="Chao Q."/>
            <person name="Choy N."/>
            <person name="Enju A."/>
            <person name="Goldsmith A.D."/>
            <person name="Gurjal M."/>
            <person name="Hansen N.F."/>
            <person name="Hayashizaki Y."/>
            <person name="Johnson-Hopson C."/>
            <person name="Hsuan V.W."/>
            <person name="Iida K."/>
            <person name="Karnes M."/>
            <person name="Khan S."/>
            <person name="Koesema E."/>
            <person name="Ishida J."/>
            <person name="Jiang P.X."/>
            <person name="Jones T."/>
            <person name="Kawai J."/>
            <person name="Kamiya A."/>
            <person name="Meyers C."/>
            <person name="Nakajima M."/>
            <person name="Narusaka M."/>
            <person name="Seki M."/>
            <person name="Sakurai T."/>
            <person name="Satou M."/>
            <person name="Tamse R."/>
            <person name="Vaysberg M."/>
            <person name="Wallender E.K."/>
            <person name="Wong C."/>
            <person name="Yamamura Y."/>
            <person name="Yuan S."/>
            <person name="Shinozaki K."/>
            <person name="Davis R.W."/>
            <person name="Theologis A."/>
            <person name="Ecker J.R."/>
        </authorList>
    </citation>
    <scope>NUCLEOTIDE SEQUENCE [LARGE SCALE MRNA]</scope>
    <source>
        <strain>cv. Columbia</strain>
    </source>
</reference>
<comment type="function">
    <text evidence="1">Probably functions in cell division and growth processes. Interacts with certain SNAREs as part of specialized membrane fusion events where vesicles from the same organelle fuse (homotypic fusion) (By similarity).</text>
</comment>
<comment type="subcellular location">
    <subcellularLocation>
        <location evidence="1">Nucleus</location>
    </subcellularLocation>
    <subcellularLocation>
        <location evidence="1">Cytoplasm</location>
        <location evidence="1">Cytoskeleton</location>
        <location evidence="1">Phragmoplast</location>
    </subcellularLocation>
    <text evidence="1">Primarily localized to the nucleus and, during cytokinesis, to the phragmoplast, a site where membrane vesicles are targeted in the deposition of new cell wall materials.</text>
</comment>
<comment type="similarity">
    <text evidence="3">Belongs to the AAA ATPase family.</text>
</comment>
<evidence type="ECO:0000250" key="1"/>
<evidence type="ECO:0000255" key="2"/>
<evidence type="ECO:0000305" key="3"/>
<sequence>MLETESSVCDNIAGNEKWRAEAEIGGNERALQALRELIIFPFRYPLEARTLGLKWPRGLLLYGPPGTGKTSLVRAVVQECDAHLIVLSPHSVHRAHAGESEKVLREAFAEASSHAVSDKPSVIFIDEIDVLCPRRDARREQDVRIASQLFTLMDSNKPSSSAPRVVVVASTNRVDAIDPALRRAGRFDALVEVSTPNEEDRLKILQLYTKKVNLDPSVDLQAIAISCNGYVGADLEALCREATISASKRSSDSLILTSQDFKIAKSVVGPSINRGITVEIPKVTWDDVGGLKDLKKKLQQAVEWPIKHSAAFVKMGISPMRGILLHGPPGCSKTTLAKAAANAAQASFFSLSCAELFSMYVGEGEALLRNTFQRARLASPSIIFFDEADVVACKRGDESSSNSSTVGERLLSTLLTEMDGLEEAKGILVLAATNRPYAIDAALMRPGRFDLVLYVPPPDLEARFEILQVHTRNMTLGDDVDLRKIAEETDLFTGAELEGLCRESGTVSLRENIAATAVFNRHFQTAKSSLKPALTIEEVETYSSFRKAAKRSDSKPIPINKKKATSTVFGFSWQLGVLSLLLLATGNYYFNHTKHELLVASAT</sequence>
<feature type="chain" id="PRO_0000084580" description="Cell division control protein 48 homolog B">
    <location>
        <begin position="1"/>
        <end position="603"/>
    </location>
</feature>
<feature type="binding site" evidence="2">
    <location>
        <begin position="63"/>
        <end position="70"/>
    </location>
    <ligand>
        <name>ATP</name>
        <dbReference type="ChEBI" id="CHEBI:30616"/>
    </ligand>
</feature>
<feature type="binding site" evidence="2">
    <location>
        <begin position="327"/>
        <end position="334"/>
    </location>
    <ligand>
        <name>ATP</name>
        <dbReference type="ChEBI" id="CHEBI:30616"/>
    </ligand>
</feature>
<accession>Q9ZPR1</accession>
<gene>
    <name type="primary">CDC48B</name>
    <name type="ordered locus">At2g03670</name>
    <name type="ORF">F19B11.12</name>
</gene>
<dbReference type="EMBL" id="AC006836">
    <property type="protein sequence ID" value="AAD20084.1"/>
    <property type="molecule type" value="Genomic_DNA"/>
</dbReference>
<dbReference type="EMBL" id="CP002685">
    <property type="protein sequence ID" value="AEC05734.1"/>
    <property type="molecule type" value="Genomic_DNA"/>
</dbReference>
<dbReference type="EMBL" id="AY062443">
    <property type="protein sequence ID" value="AAL32521.1"/>
    <property type="molecule type" value="mRNA"/>
</dbReference>
<dbReference type="EMBL" id="BT008371">
    <property type="protein sequence ID" value="AAP37730.1"/>
    <property type="molecule type" value="mRNA"/>
</dbReference>
<dbReference type="PIR" id="A84451">
    <property type="entry name" value="A84451"/>
</dbReference>
<dbReference type="RefSeq" id="NP_178463.1">
    <property type="nucleotide sequence ID" value="NM_126415.6"/>
</dbReference>
<dbReference type="SMR" id="Q9ZPR1"/>
<dbReference type="BioGRID" id="296">
    <property type="interactions" value="7"/>
</dbReference>
<dbReference type="FunCoup" id="Q9ZPR1">
    <property type="interactions" value="804"/>
</dbReference>
<dbReference type="STRING" id="3702.Q9ZPR1"/>
<dbReference type="TCDB" id="3.A.16.1.5">
    <property type="family name" value="the endoplasmic reticular retrotranslocon (er-rt) family"/>
</dbReference>
<dbReference type="PaxDb" id="3702-AT2G03670.1"/>
<dbReference type="ProteomicsDB" id="223908"/>
<dbReference type="EnsemblPlants" id="AT2G03670.1">
    <property type="protein sequence ID" value="AT2G03670.1"/>
    <property type="gene ID" value="AT2G03670"/>
</dbReference>
<dbReference type="GeneID" id="814895"/>
<dbReference type="Gramene" id="AT2G03670.1">
    <property type="protein sequence ID" value="AT2G03670.1"/>
    <property type="gene ID" value="AT2G03670"/>
</dbReference>
<dbReference type="KEGG" id="ath:AT2G03670"/>
<dbReference type="Araport" id="AT2G03670"/>
<dbReference type="TAIR" id="AT2G03670">
    <property type="gene designation" value="CDC48B"/>
</dbReference>
<dbReference type="eggNOG" id="KOG0730">
    <property type="taxonomic scope" value="Eukaryota"/>
</dbReference>
<dbReference type="HOGENOM" id="CLU_000688_12_3_1"/>
<dbReference type="InParanoid" id="Q9ZPR1"/>
<dbReference type="OMA" id="DRHIYVA"/>
<dbReference type="OrthoDB" id="5421at2759"/>
<dbReference type="PhylomeDB" id="Q9ZPR1"/>
<dbReference type="PRO" id="PR:Q9ZPR1"/>
<dbReference type="Proteomes" id="UP000006548">
    <property type="component" value="Chromosome 2"/>
</dbReference>
<dbReference type="ExpressionAtlas" id="Q9ZPR1">
    <property type="expression patterns" value="baseline and differential"/>
</dbReference>
<dbReference type="GO" id="GO:0005856">
    <property type="term" value="C:cytoskeleton"/>
    <property type="evidence" value="ECO:0007669"/>
    <property type="project" value="UniProtKB-KW"/>
</dbReference>
<dbReference type="GO" id="GO:0005634">
    <property type="term" value="C:nucleus"/>
    <property type="evidence" value="ECO:0007669"/>
    <property type="project" value="UniProtKB-SubCell"/>
</dbReference>
<dbReference type="GO" id="GO:0009524">
    <property type="term" value="C:phragmoplast"/>
    <property type="evidence" value="ECO:0007669"/>
    <property type="project" value="UniProtKB-SubCell"/>
</dbReference>
<dbReference type="GO" id="GO:0005524">
    <property type="term" value="F:ATP binding"/>
    <property type="evidence" value="ECO:0007669"/>
    <property type="project" value="UniProtKB-KW"/>
</dbReference>
<dbReference type="GO" id="GO:0016887">
    <property type="term" value="F:ATP hydrolysis activity"/>
    <property type="evidence" value="ECO:0007669"/>
    <property type="project" value="InterPro"/>
</dbReference>
<dbReference type="GO" id="GO:0051301">
    <property type="term" value="P:cell division"/>
    <property type="evidence" value="ECO:0007669"/>
    <property type="project" value="UniProtKB-KW"/>
</dbReference>
<dbReference type="GO" id="GO:0015031">
    <property type="term" value="P:protein transport"/>
    <property type="evidence" value="ECO:0007669"/>
    <property type="project" value="UniProtKB-KW"/>
</dbReference>
<dbReference type="CDD" id="cd19503">
    <property type="entry name" value="RecA-like_CDC48_NLV2_r1-like"/>
    <property type="match status" value="1"/>
</dbReference>
<dbReference type="CDD" id="cd19511">
    <property type="entry name" value="RecA-like_CDC48_r2-like"/>
    <property type="match status" value="1"/>
</dbReference>
<dbReference type="FunFam" id="3.40.50.300:FF:001439">
    <property type="entry name" value="Cell division control protein 48 homolog B"/>
    <property type="match status" value="1"/>
</dbReference>
<dbReference type="FunFam" id="3.40.50.300:FF:001107">
    <property type="entry name" value="Cell division control protein 48-B-like protein"/>
    <property type="match status" value="1"/>
</dbReference>
<dbReference type="FunFam" id="1.10.8.60:FF:000038">
    <property type="entry name" value="spermatogenesis-associated protein 5-like protein 1"/>
    <property type="match status" value="1"/>
</dbReference>
<dbReference type="Gene3D" id="1.10.8.60">
    <property type="match status" value="2"/>
</dbReference>
<dbReference type="Gene3D" id="3.40.50.300">
    <property type="entry name" value="P-loop containing nucleotide triphosphate hydrolases"/>
    <property type="match status" value="2"/>
</dbReference>
<dbReference type="InterPro" id="IPR003593">
    <property type="entry name" value="AAA+_ATPase"/>
</dbReference>
<dbReference type="InterPro" id="IPR050168">
    <property type="entry name" value="AAA_ATPase_domain"/>
</dbReference>
<dbReference type="InterPro" id="IPR041569">
    <property type="entry name" value="AAA_lid_3"/>
</dbReference>
<dbReference type="InterPro" id="IPR003959">
    <property type="entry name" value="ATPase_AAA_core"/>
</dbReference>
<dbReference type="InterPro" id="IPR003960">
    <property type="entry name" value="ATPase_AAA_CS"/>
</dbReference>
<dbReference type="InterPro" id="IPR027417">
    <property type="entry name" value="P-loop_NTPase"/>
</dbReference>
<dbReference type="PANTHER" id="PTHR23077:SF117">
    <property type="entry name" value="AAA+ ATPASE DOMAIN-CONTAINING PROTEIN"/>
    <property type="match status" value="1"/>
</dbReference>
<dbReference type="PANTHER" id="PTHR23077">
    <property type="entry name" value="AAA-FAMILY ATPASE"/>
    <property type="match status" value="1"/>
</dbReference>
<dbReference type="Pfam" id="PF00004">
    <property type="entry name" value="AAA"/>
    <property type="match status" value="2"/>
</dbReference>
<dbReference type="Pfam" id="PF17862">
    <property type="entry name" value="AAA_lid_3"/>
    <property type="match status" value="2"/>
</dbReference>
<dbReference type="SMART" id="SM00382">
    <property type="entry name" value="AAA"/>
    <property type="match status" value="2"/>
</dbReference>
<dbReference type="SUPFAM" id="SSF52540">
    <property type="entry name" value="P-loop containing nucleoside triphosphate hydrolases"/>
    <property type="match status" value="2"/>
</dbReference>
<dbReference type="PROSITE" id="PS00674">
    <property type="entry name" value="AAA"/>
    <property type="match status" value="1"/>
</dbReference>
<proteinExistence type="evidence at transcript level"/>
<protein>
    <recommendedName>
        <fullName>Cell division control protein 48 homolog B</fullName>
        <shortName>AtCDC48b</shortName>
    </recommendedName>
</protein>
<name>CD48B_ARATH</name>
<keyword id="KW-0067">ATP-binding</keyword>
<keyword id="KW-0131">Cell cycle</keyword>
<keyword id="KW-0132">Cell division</keyword>
<keyword id="KW-0963">Cytoplasm</keyword>
<keyword id="KW-0206">Cytoskeleton</keyword>
<keyword id="KW-0547">Nucleotide-binding</keyword>
<keyword id="KW-0539">Nucleus</keyword>
<keyword id="KW-0653">Protein transport</keyword>
<keyword id="KW-1185">Reference proteome</keyword>
<keyword id="KW-0813">Transport</keyword>